<proteinExistence type="evidence at protein level"/>
<name>CLPC1_ARATH</name>
<dbReference type="EMBL" id="AF022909">
    <property type="protein sequence ID" value="AAC04687.1"/>
    <property type="molecule type" value="mRNA"/>
</dbReference>
<dbReference type="EMBL" id="AB017063">
    <property type="protein sequence ID" value="BAB08738.1"/>
    <property type="molecule type" value="Genomic_DNA"/>
</dbReference>
<dbReference type="EMBL" id="CP002688">
    <property type="protein sequence ID" value="AED96011.1"/>
    <property type="molecule type" value="Genomic_DNA"/>
</dbReference>
<dbReference type="EMBL" id="AY102125">
    <property type="protein sequence ID" value="AAM26692.1"/>
    <property type="molecule type" value="mRNA"/>
</dbReference>
<dbReference type="EMBL" id="AK227173">
    <property type="protein sequence ID" value="BAE99213.1"/>
    <property type="molecule type" value="mRNA"/>
</dbReference>
<dbReference type="PIR" id="T52292">
    <property type="entry name" value="T52292"/>
</dbReference>
<dbReference type="RefSeq" id="NP_568746.1">
    <property type="nucleotide sequence ID" value="NM_124471.4"/>
</dbReference>
<dbReference type="PDB" id="5GUI">
    <property type="method" value="X-ray"/>
    <property type="resolution" value="1.20 A"/>
    <property type="chains" value="A=94-238"/>
</dbReference>
<dbReference type="PDBsum" id="5GUI"/>
<dbReference type="SMR" id="Q9FI56"/>
<dbReference type="BioGRID" id="20411">
    <property type="interactions" value="3"/>
</dbReference>
<dbReference type="FunCoup" id="Q9FI56">
    <property type="interactions" value="829"/>
</dbReference>
<dbReference type="IntAct" id="Q9FI56">
    <property type="interactions" value="5"/>
</dbReference>
<dbReference type="STRING" id="3702.Q9FI56"/>
<dbReference type="TCDB" id="3.A.9.1.2">
    <property type="family name" value="the chloroplast envelope protein translocase (cept or tic-toc) family"/>
</dbReference>
<dbReference type="MetOSite" id="Q9FI56"/>
<dbReference type="PaxDb" id="3702-AT5G50920.1"/>
<dbReference type="ProteomicsDB" id="246585"/>
<dbReference type="EnsemblPlants" id="AT5G50920.1">
    <property type="protein sequence ID" value="AT5G50920.1"/>
    <property type="gene ID" value="AT5G50920"/>
</dbReference>
<dbReference type="GeneID" id="835165"/>
<dbReference type="Gramene" id="AT5G50920.1">
    <property type="protein sequence ID" value="AT5G50920.1"/>
    <property type="gene ID" value="AT5G50920"/>
</dbReference>
<dbReference type="KEGG" id="ath:AT5G50920"/>
<dbReference type="Araport" id="AT5G50920"/>
<dbReference type="TAIR" id="AT5G50920">
    <property type="gene designation" value="CLPC1"/>
</dbReference>
<dbReference type="eggNOG" id="KOG1051">
    <property type="taxonomic scope" value="Eukaryota"/>
</dbReference>
<dbReference type="HOGENOM" id="CLU_005070_4_1_1"/>
<dbReference type="InParanoid" id="Q9FI56"/>
<dbReference type="OMA" id="KMMCSQL"/>
<dbReference type="OrthoDB" id="47330at2759"/>
<dbReference type="PhylomeDB" id="Q9FI56"/>
<dbReference type="BRENDA" id="7.4.2.4">
    <property type="organism ID" value="399"/>
</dbReference>
<dbReference type="PRO" id="PR:Q9FI56"/>
<dbReference type="Proteomes" id="UP000006548">
    <property type="component" value="Chromosome 5"/>
</dbReference>
<dbReference type="ExpressionAtlas" id="Q9FI56">
    <property type="expression patterns" value="baseline and differential"/>
</dbReference>
<dbReference type="GO" id="GO:0009507">
    <property type="term" value="C:chloroplast"/>
    <property type="evidence" value="ECO:0000314"/>
    <property type="project" value="TAIR"/>
</dbReference>
<dbReference type="GO" id="GO:0009941">
    <property type="term" value="C:chloroplast envelope"/>
    <property type="evidence" value="ECO:0007005"/>
    <property type="project" value="TAIR"/>
</dbReference>
<dbReference type="GO" id="GO:0009706">
    <property type="term" value="C:chloroplast inner membrane"/>
    <property type="evidence" value="ECO:0000314"/>
    <property type="project" value="TAIR"/>
</dbReference>
<dbReference type="GO" id="GO:0009570">
    <property type="term" value="C:chloroplast stroma"/>
    <property type="evidence" value="ECO:0000314"/>
    <property type="project" value="TAIR"/>
</dbReference>
<dbReference type="GO" id="GO:0009535">
    <property type="term" value="C:chloroplast thylakoid membrane"/>
    <property type="evidence" value="ECO:0007005"/>
    <property type="project" value="TAIR"/>
</dbReference>
<dbReference type="GO" id="GO:0005739">
    <property type="term" value="C:mitochondrion"/>
    <property type="evidence" value="ECO:0007005"/>
    <property type="project" value="TAIR"/>
</dbReference>
<dbReference type="GO" id="GO:0009505">
    <property type="term" value="C:plant-type cell wall"/>
    <property type="evidence" value="ECO:0007005"/>
    <property type="project" value="TAIR"/>
</dbReference>
<dbReference type="GO" id="GO:0009536">
    <property type="term" value="C:plastid"/>
    <property type="evidence" value="ECO:0007005"/>
    <property type="project" value="TAIR"/>
</dbReference>
<dbReference type="GO" id="GO:0009532">
    <property type="term" value="C:plastid stroma"/>
    <property type="evidence" value="ECO:0000314"/>
    <property type="project" value="TAIR"/>
</dbReference>
<dbReference type="GO" id="GO:0031897">
    <property type="term" value="C:Tic complex"/>
    <property type="evidence" value="ECO:0000304"/>
    <property type="project" value="TAIR"/>
</dbReference>
<dbReference type="GO" id="GO:0005524">
    <property type="term" value="F:ATP binding"/>
    <property type="evidence" value="ECO:0007669"/>
    <property type="project" value="UniProtKB-KW"/>
</dbReference>
<dbReference type="GO" id="GO:0016887">
    <property type="term" value="F:ATP hydrolysis activity"/>
    <property type="evidence" value="ECO:0007669"/>
    <property type="project" value="InterPro"/>
</dbReference>
<dbReference type="GO" id="GO:0004176">
    <property type="term" value="F:ATP-dependent peptidase activity"/>
    <property type="evidence" value="ECO:0000314"/>
    <property type="project" value="TAIR"/>
</dbReference>
<dbReference type="GO" id="GO:0003729">
    <property type="term" value="F:mRNA binding"/>
    <property type="evidence" value="ECO:0000314"/>
    <property type="project" value="TAIR"/>
</dbReference>
<dbReference type="GO" id="GO:0009658">
    <property type="term" value="P:chloroplast organization"/>
    <property type="evidence" value="ECO:0000315"/>
    <property type="project" value="TAIR"/>
</dbReference>
<dbReference type="GO" id="GO:0045037">
    <property type="term" value="P:protein import into chloroplast stroma"/>
    <property type="evidence" value="ECO:0000315"/>
    <property type="project" value="TAIR"/>
</dbReference>
<dbReference type="GO" id="GO:0045036">
    <property type="term" value="P:protein targeting to chloroplast"/>
    <property type="evidence" value="ECO:0000315"/>
    <property type="project" value="TAIR"/>
</dbReference>
<dbReference type="GO" id="GO:0010380">
    <property type="term" value="P:regulation of chlorophyll biosynthetic process"/>
    <property type="evidence" value="ECO:0000315"/>
    <property type="project" value="TAIR"/>
</dbReference>
<dbReference type="CDD" id="cd00009">
    <property type="entry name" value="AAA"/>
    <property type="match status" value="1"/>
</dbReference>
<dbReference type="CDD" id="cd19499">
    <property type="entry name" value="RecA-like_ClpB_Hsp104-like"/>
    <property type="match status" value="1"/>
</dbReference>
<dbReference type="FunFam" id="1.10.8.60:FF:000017">
    <property type="entry name" value="ATP-dependent chaperone ClpB"/>
    <property type="match status" value="1"/>
</dbReference>
<dbReference type="FunFam" id="1.10.8.60:FF:000011">
    <property type="entry name" value="ATP-dependent Clp protease ATP-binding subunit"/>
    <property type="match status" value="1"/>
</dbReference>
<dbReference type="FunFam" id="1.10.1780.10:FF:000004">
    <property type="entry name" value="ATP-dependent Clp protease ATP-binding subunit ClpC"/>
    <property type="match status" value="1"/>
</dbReference>
<dbReference type="FunFam" id="3.40.50.300:FF:000025">
    <property type="entry name" value="ATP-dependent Clp protease subunit"/>
    <property type="match status" value="1"/>
</dbReference>
<dbReference type="FunFam" id="3.40.50.300:FF:000010">
    <property type="entry name" value="Chaperone clpB 1, putative"/>
    <property type="match status" value="1"/>
</dbReference>
<dbReference type="FunFam" id="4.10.860.10:FF:000011">
    <property type="entry name" value="Chaperone protein ClpC1, chloroplastic"/>
    <property type="match status" value="1"/>
</dbReference>
<dbReference type="Gene3D" id="1.10.8.60">
    <property type="match status" value="2"/>
</dbReference>
<dbReference type="Gene3D" id="1.10.1780.10">
    <property type="entry name" value="Clp, N-terminal domain"/>
    <property type="match status" value="1"/>
</dbReference>
<dbReference type="Gene3D" id="3.40.50.300">
    <property type="entry name" value="P-loop containing nucleotide triphosphate hydrolases"/>
    <property type="match status" value="2"/>
</dbReference>
<dbReference type="Gene3D" id="4.10.860.10">
    <property type="entry name" value="UVR domain"/>
    <property type="match status" value="1"/>
</dbReference>
<dbReference type="InterPro" id="IPR003593">
    <property type="entry name" value="AAA+_ATPase"/>
</dbReference>
<dbReference type="InterPro" id="IPR003959">
    <property type="entry name" value="ATPase_AAA_core"/>
</dbReference>
<dbReference type="InterPro" id="IPR019489">
    <property type="entry name" value="Clp_ATPase_C"/>
</dbReference>
<dbReference type="InterPro" id="IPR036628">
    <property type="entry name" value="Clp_N_dom_sf"/>
</dbReference>
<dbReference type="InterPro" id="IPR004176">
    <property type="entry name" value="Clp_R_dom"/>
</dbReference>
<dbReference type="InterPro" id="IPR001270">
    <property type="entry name" value="ClpA/B"/>
</dbReference>
<dbReference type="InterPro" id="IPR018368">
    <property type="entry name" value="ClpA/B_CS1"/>
</dbReference>
<dbReference type="InterPro" id="IPR028299">
    <property type="entry name" value="ClpA/B_CS2"/>
</dbReference>
<dbReference type="InterPro" id="IPR041546">
    <property type="entry name" value="ClpA/ClpB_AAA_lid"/>
</dbReference>
<dbReference type="InterPro" id="IPR050130">
    <property type="entry name" value="ClpA_ClpB"/>
</dbReference>
<dbReference type="InterPro" id="IPR027417">
    <property type="entry name" value="P-loop_NTPase"/>
</dbReference>
<dbReference type="InterPro" id="IPR001943">
    <property type="entry name" value="UVR_dom"/>
</dbReference>
<dbReference type="PANTHER" id="PTHR11638">
    <property type="entry name" value="ATP-DEPENDENT CLP PROTEASE"/>
    <property type="match status" value="1"/>
</dbReference>
<dbReference type="PANTHER" id="PTHR11638:SF155">
    <property type="entry name" value="CHAPERONE PROTEIN CLPC1, CHLOROPLASTIC-LIKE"/>
    <property type="match status" value="1"/>
</dbReference>
<dbReference type="Pfam" id="PF00004">
    <property type="entry name" value="AAA"/>
    <property type="match status" value="1"/>
</dbReference>
<dbReference type="Pfam" id="PF07724">
    <property type="entry name" value="AAA_2"/>
    <property type="match status" value="1"/>
</dbReference>
<dbReference type="Pfam" id="PF17871">
    <property type="entry name" value="AAA_lid_9"/>
    <property type="match status" value="1"/>
</dbReference>
<dbReference type="Pfam" id="PF02861">
    <property type="entry name" value="Clp_N"/>
    <property type="match status" value="2"/>
</dbReference>
<dbReference type="Pfam" id="PF10431">
    <property type="entry name" value="ClpB_D2-small"/>
    <property type="match status" value="1"/>
</dbReference>
<dbReference type="PRINTS" id="PR00300">
    <property type="entry name" value="CLPPROTEASEA"/>
</dbReference>
<dbReference type="SMART" id="SM00382">
    <property type="entry name" value="AAA"/>
    <property type="match status" value="2"/>
</dbReference>
<dbReference type="SMART" id="SM01086">
    <property type="entry name" value="ClpB_D2-small"/>
    <property type="match status" value="1"/>
</dbReference>
<dbReference type="SUPFAM" id="SSF81923">
    <property type="entry name" value="Double Clp-N motif"/>
    <property type="match status" value="1"/>
</dbReference>
<dbReference type="SUPFAM" id="SSF52540">
    <property type="entry name" value="P-loop containing nucleoside triphosphate hydrolases"/>
    <property type="match status" value="2"/>
</dbReference>
<dbReference type="PROSITE" id="PS51903">
    <property type="entry name" value="CLP_R"/>
    <property type="match status" value="1"/>
</dbReference>
<dbReference type="PROSITE" id="PS00870">
    <property type="entry name" value="CLPAB_1"/>
    <property type="match status" value="1"/>
</dbReference>
<dbReference type="PROSITE" id="PS00871">
    <property type="entry name" value="CLPAB_2"/>
    <property type="match status" value="1"/>
</dbReference>
<dbReference type="PROSITE" id="PS50151">
    <property type="entry name" value="UVR"/>
    <property type="match status" value="1"/>
</dbReference>
<sequence>MAMATRVLAQSTPPSLACYQRNVPSRGSGRSRRSVKMMCSQLQVSGLRMQGFMGLRGNNALDTLGKSRQDFHSKVRQAMNVPKGKASRFTVKAMFERFTEKAIKVIMLAQEEARRLGHNFVGTEQILLGLIGEGTGIAAKVLKSMGINLKDARVEVEKIIGRGSGFVAVEIPFTPRAKRVLELSLEEARQLGHNYIGSEHLLLGLLREGEGVAARVLENLGADPSNIRTQVIRMVGENNEVTANVGGGSSSNKMPTLEEYGTNLTKLAEEGKLDPVVGRQPQIERVVQILGRRTKNNPCLIGEPGVGKTAIAEGLAQRIASGDVPETIEGKKVITLDMGLLVAGTKYRGEFEERLKKLMEEIRQSDEIILFIDEVHTLIGAGAAEGAIDAANILKPALARGELQCIGATTLDEYRKHIEKDPALERRFQPVKVPEPTVDETIQILKGLRERYEIHHKLRYTDESLVAAAQLSYQYISDRFLPDKAIDLIDEAGSRVRLRHAQVPEEARELEKELRQITKEKNEAVRGQDFEKAGTLRDREIELRAEVSAIQAKGKEMSKAESETGEEGPMVTESDIQHIVSSWTGIPVEKVSTDESDRLLKMEETLHKRIIGQDEAVKAISRAIRRARVGLKNPNRPIASFIFSGPTGVGKSELAKALAAYYFGSEEAMIRLDMSEFMERHTVSKLIGSPPGYVGYTEGGQLTEAVRRRPYTVVLFDEIEKAHPDVFNMMLQILEDGRLTDSKGRTVDFKNTLLIMTSNVGSSVIEKGGRRIGFDLDYDEKDSSYNRIKSLVTEELKQYFRPEFLNRLDEMIVFRQLTKLEVKEIADILLKEVFERLKKKEIELQVTERFKERVVDEGYNPSYGARPLRRAIMRLLEDSMAEKMLAREIKEGDSVIVDVDAEGNVTVLNGGSGTPTTSLEEQEDSLPVA</sequence>
<organism>
    <name type="scientific">Arabidopsis thaliana</name>
    <name type="common">Mouse-ear cress</name>
    <dbReference type="NCBI Taxonomy" id="3702"/>
    <lineage>
        <taxon>Eukaryota</taxon>
        <taxon>Viridiplantae</taxon>
        <taxon>Streptophyta</taxon>
        <taxon>Embryophyta</taxon>
        <taxon>Tracheophyta</taxon>
        <taxon>Spermatophyta</taxon>
        <taxon>Magnoliopsida</taxon>
        <taxon>eudicotyledons</taxon>
        <taxon>Gunneridae</taxon>
        <taxon>Pentapetalae</taxon>
        <taxon>rosids</taxon>
        <taxon>malvids</taxon>
        <taxon>Brassicales</taxon>
        <taxon>Brassicaceae</taxon>
        <taxon>Camelineae</taxon>
        <taxon>Arabidopsis</taxon>
    </lineage>
</organism>
<evidence type="ECO:0000250" key="1"/>
<evidence type="ECO:0000255" key="2"/>
<evidence type="ECO:0000255" key="3">
    <source>
        <dbReference type="PROSITE-ProRule" id="PRU00217"/>
    </source>
</evidence>
<evidence type="ECO:0000255" key="4">
    <source>
        <dbReference type="PROSITE-ProRule" id="PRU01251"/>
    </source>
</evidence>
<evidence type="ECO:0000256" key="5">
    <source>
        <dbReference type="SAM" id="MobiDB-lite"/>
    </source>
</evidence>
<evidence type="ECO:0000269" key="6">
    <source>
    </source>
</evidence>
<evidence type="ECO:0000269" key="7">
    <source>
    </source>
</evidence>
<evidence type="ECO:0000269" key="8">
    <source>
    </source>
</evidence>
<evidence type="ECO:0000269" key="9">
    <source>
    </source>
</evidence>
<evidence type="ECO:0000269" key="10">
    <source>
    </source>
</evidence>
<evidence type="ECO:0000269" key="11">
    <source>
    </source>
</evidence>
<evidence type="ECO:0000269" key="12">
    <source>
    </source>
</evidence>
<evidence type="ECO:0000269" key="13">
    <source>
    </source>
</evidence>
<evidence type="ECO:0000269" key="14">
    <source>
    </source>
</evidence>
<evidence type="ECO:0000269" key="15">
    <source>
    </source>
</evidence>
<evidence type="ECO:0000269" key="16">
    <source>
    </source>
</evidence>
<evidence type="ECO:0000269" key="17">
    <source>
    </source>
</evidence>
<evidence type="ECO:0000269" key="18">
    <source>
    </source>
</evidence>
<evidence type="ECO:0000269" key="19">
    <source>
    </source>
</evidence>
<evidence type="ECO:0000269" key="20">
    <source ref="11"/>
</evidence>
<evidence type="ECO:0000303" key="21">
    <source>
    </source>
</evidence>
<evidence type="ECO:0000303" key="22">
    <source>
    </source>
</evidence>
<evidence type="ECO:0000305" key="23"/>
<evidence type="ECO:0000312" key="24">
    <source>
        <dbReference type="Araport" id="AT5G50920"/>
    </source>
</evidence>
<evidence type="ECO:0000312" key="25">
    <source>
        <dbReference type="EMBL" id="BAB08738.1"/>
    </source>
</evidence>
<evidence type="ECO:0007829" key="26">
    <source>
        <dbReference type="PDB" id="5GUI"/>
    </source>
</evidence>
<accession>Q9FI56</accession>
<accession>O48931</accession>
<gene>
    <name evidence="21" type="primary">CLPC1</name>
    <name type="synonym">DCA1</name>
    <name evidence="22" type="synonym">HSP93-V</name>
    <name type="synonym">IRM1</name>
    <name evidence="24" type="ordered locus">At5g50920</name>
    <name evidence="25" type="ORF">K3K7.7</name>
</gene>
<comment type="function">
    <text evidence="8 9 11 13 14 15 16 18">Molecular chaperone that hydrolyzes ATP and is associated with the chloroplast protein import apparatus. May function as the motor for chloroplast protein translocation, as translocation requires ATP hydrolysis in the stroma. May interact with a ClpP-like protease involved in degradation of denatured proteins in the chloroplast. Involved in the regulation of chlorophyll b biosynthesis through the destabilization of chlorophyllide a oxygenase (CAO) protein in response to the accumulation of chlorophyll b. Involved in leaf iron homeostasis.</text>
</comment>
<comment type="subunit">
    <text evidence="7 17 19">Homodimer (PubMed:14593120). May form hexamer and interact with Clp core (PubMed:14593120). Interacts (via N-terminus) with CLPS1 (PubMed:23898032). Interacts with CLPF (PubMed:26419670).</text>
</comment>
<comment type="interaction">
    <interactant intactId="EBI-2297694">
        <id>Q9FI56</id>
    </interactant>
    <interactant intactId="EBI-639092">
        <id>Q8LPR9</id>
        <label>TIC110</label>
    </interactant>
    <organismsDiffer>false</organismsDiffer>
    <experiments>4</experiments>
</comment>
<comment type="interaction">
    <interactant intactId="EBI-2297694">
        <id>Q9FI56</id>
    </interactant>
    <interactant intactId="EBI-639157">
        <id>Q9FMD5</id>
        <label>TIC40</label>
    </interactant>
    <organismsDiffer>false</organismsDiffer>
    <experiments>3</experiments>
</comment>
<comment type="subcellular location">
    <subcellularLocation>
        <location evidence="6 7 15 18">Plastid</location>
        <location evidence="6 7 15 18">Chloroplast stroma</location>
    </subcellularLocation>
    <subcellularLocation>
        <location evidence="18">Plastid</location>
        <location evidence="18">Chloroplast membrane</location>
    </subcellularLocation>
    <text evidence="18">The membrane association is important for the in vivo functions.</text>
</comment>
<comment type="tissue specificity">
    <text evidence="6 11 15 17">Highly expressed in rosette leaves. Expressed in roots, stems and inflorescences (PubMed:11982939, PubMed:15659100, PubMed:20382967). Expressed in photosynthetic green tissues with high levels in young, developing leaf tissues (PubMed:23898032).</text>
</comment>
<comment type="induction">
    <text evidence="6 12">By cold and salt stresses. Not induced by heat stress.</text>
</comment>
<comment type="domain">
    <text evidence="16">The Clp repeat (R) domain is important for membrane association and is essential for the in vivo functions, but not for the ATPase activity.</text>
</comment>
<comment type="disruption phenotype">
    <text evidence="9 10 11 13 14 15 20">Small plants with chlorotic leaves, aberrant chloroplast biogenesis and inefficient chloroplast import of both photosynthetic and non-photosynthetic preproteins (PubMed:15516497, PubMed:15563614, PubMed:15659100, PubMed:17291312, PubMed:17376159, PubMed:20382967, Ref.11). Clpc1 and clpc2 double mutants are embryo lethal when homozygous (PubMed:17376159).</text>
</comment>
<comment type="similarity">
    <text evidence="23">Belongs to the ClpA/ClpB family. ClpC subfamily.</text>
</comment>
<reference key="1">
    <citation type="journal article" date="2002" name="Physiol. Plantarum">
        <title>Characterization of chloroplast Clp proteins in Arabidopsis: localization, tissue specificity and stress responses.</title>
        <authorList>
            <person name="Zheng B."/>
            <person name="Halperin T."/>
            <person name="Hruskova-Heidingsfeldova O."/>
            <person name="Adam Z."/>
            <person name="Clarke A.K."/>
        </authorList>
    </citation>
    <scope>NUCLEOTIDE SEQUENCE [MRNA]</scope>
    <scope>SUBCELLULAR LOCATION</scope>
    <scope>TISSUE SPECIFICITY</scope>
    <scope>INDUCTION</scope>
</reference>
<reference key="2">
    <citation type="journal article" date="1999" name="DNA Res.">
        <title>Structural analysis of Arabidopsis thaliana chromosome 5. IX. Sequence features of the regions of 1,011,550 bp covered by seventeen P1 and TAC clones.</title>
        <authorList>
            <person name="Kaneko T."/>
            <person name="Katoh T."/>
            <person name="Sato S."/>
            <person name="Nakamura Y."/>
            <person name="Asamizu E."/>
            <person name="Kotani H."/>
            <person name="Miyajima N."/>
            <person name="Tabata S."/>
        </authorList>
    </citation>
    <scope>NUCLEOTIDE SEQUENCE [LARGE SCALE GENOMIC DNA]</scope>
    <source>
        <strain>cv. Columbia</strain>
    </source>
</reference>
<reference key="3">
    <citation type="journal article" date="2017" name="Plant J.">
        <title>Araport11: a complete reannotation of the Arabidopsis thaliana reference genome.</title>
        <authorList>
            <person name="Cheng C.Y."/>
            <person name="Krishnakumar V."/>
            <person name="Chan A.P."/>
            <person name="Thibaud-Nissen F."/>
            <person name="Schobel S."/>
            <person name="Town C.D."/>
        </authorList>
    </citation>
    <scope>GENOME REANNOTATION</scope>
    <source>
        <strain>cv. Columbia</strain>
    </source>
</reference>
<reference key="4">
    <citation type="journal article" date="2003" name="Science">
        <title>Empirical analysis of transcriptional activity in the Arabidopsis genome.</title>
        <authorList>
            <person name="Yamada K."/>
            <person name="Lim J."/>
            <person name="Dale J.M."/>
            <person name="Chen H."/>
            <person name="Shinn P."/>
            <person name="Palm C.J."/>
            <person name="Southwick A.M."/>
            <person name="Wu H.C."/>
            <person name="Kim C.J."/>
            <person name="Nguyen M."/>
            <person name="Pham P.K."/>
            <person name="Cheuk R.F."/>
            <person name="Karlin-Newmann G."/>
            <person name="Liu S.X."/>
            <person name="Lam B."/>
            <person name="Sakano H."/>
            <person name="Wu T."/>
            <person name="Yu G."/>
            <person name="Miranda M."/>
            <person name="Quach H.L."/>
            <person name="Tripp M."/>
            <person name="Chang C.H."/>
            <person name="Lee J.M."/>
            <person name="Toriumi M.J."/>
            <person name="Chan M.M."/>
            <person name="Tang C.C."/>
            <person name="Onodera C.S."/>
            <person name="Deng J.M."/>
            <person name="Akiyama K."/>
            <person name="Ansari Y."/>
            <person name="Arakawa T."/>
            <person name="Banh J."/>
            <person name="Banno F."/>
            <person name="Bowser L."/>
            <person name="Brooks S.Y."/>
            <person name="Carninci P."/>
            <person name="Chao Q."/>
            <person name="Choy N."/>
            <person name="Enju A."/>
            <person name="Goldsmith A.D."/>
            <person name="Gurjal M."/>
            <person name="Hansen N.F."/>
            <person name="Hayashizaki Y."/>
            <person name="Johnson-Hopson C."/>
            <person name="Hsuan V.W."/>
            <person name="Iida K."/>
            <person name="Karnes M."/>
            <person name="Khan S."/>
            <person name="Koesema E."/>
            <person name="Ishida J."/>
            <person name="Jiang P.X."/>
            <person name="Jones T."/>
            <person name="Kawai J."/>
            <person name="Kamiya A."/>
            <person name="Meyers C."/>
            <person name="Nakajima M."/>
            <person name="Narusaka M."/>
            <person name="Seki M."/>
            <person name="Sakurai T."/>
            <person name="Satou M."/>
            <person name="Tamse R."/>
            <person name="Vaysberg M."/>
            <person name="Wallender E.K."/>
            <person name="Wong C."/>
            <person name="Yamamura Y."/>
            <person name="Yuan S."/>
            <person name="Shinozaki K."/>
            <person name="Davis R.W."/>
            <person name="Theologis A."/>
            <person name="Ecker J.R."/>
        </authorList>
    </citation>
    <scope>NUCLEOTIDE SEQUENCE [LARGE SCALE MRNA]</scope>
    <source>
        <strain>cv. Columbia</strain>
    </source>
</reference>
<reference key="5">
    <citation type="submission" date="2006-07" db="EMBL/GenBank/DDBJ databases">
        <title>Large-scale analysis of RIKEN Arabidopsis full-length (RAFL) cDNAs.</title>
        <authorList>
            <person name="Totoki Y."/>
            <person name="Seki M."/>
            <person name="Ishida J."/>
            <person name="Nakajima M."/>
            <person name="Enju A."/>
            <person name="Kamiya A."/>
            <person name="Narusaka M."/>
            <person name="Shin-i T."/>
            <person name="Nakagawa M."/>
            <person name="Sakamoto N."/>
            <person name="Oishi K."/>
            <person name="Kohara Y."/>
            <person name="Kobayashi M."/>
            <person name="Toyoda A."/>
            <person name="Sakaki Y."/>
            <person name="Sakurai T."/>
            <person name="Iida K."/>
            <person name="Akiyama K."/>
            <person name="Satou M."/>
            <person name="Toyoda T."/>
            <person name="Konagaya A."/>
            <person name="Carninci P."/>
            <person name="Kawai J."/>
            <person name="Hayashizaki Y."/>
            <person name="Shinozaki K."/>
        </authorList>
    </citation>
    <scope>NUCLEOTIDE SEQUENCE [LARGE SCALE MRNA]</scope>
    <source>
        <strain>cv. Columbia</strain>
    </source>
</reference>
<reference key="6">
    <citation type="journal article" date="2001" name="Plant Physiol.">
        <title>Chloroplast and mitochondrial proteases in Arabidopsis. A proposed nomenclature.</title>
        <authorList>
            <person name="Adam Z."/>
            <person name="Adamska I."/>
            <person name="Nakabayashi K."/>
            <person name="Ostersetzer O."/>
            <person name="Haussuhl K."/>
            <person name="Manuell A."/>
            <person name="Zheng B."/>
            <person name="Vallon O."/>
            <person name="Rodermel S.R."/>
            <person name="Shinozaki K."/>
            <person name="Clarke A.K."/>
        </authorList>
    </citation>
    <scope>GENE FAMILY</scope>
    <scope>NOMENCLATURE</scope>
</reference>
<reference key="7">
    <citation type="journal article" date="2004" name="J. Biol. Chem.">
        <title>Clp protease complexes from photosynthetic and non-photosynthetic plastids and mitochondria of plants, their predicted three-dimensional structures, and functional implications.</title>
        <authorList>
            <person name="Peltier J.-B."/>
            <person name="Ripoll D.R."/>
            <person name="Friso G."/>
            <person name="Rudella A."/>
            <person name="Cai Y."/>
            <person name="Ytterberg J."/>
            <person name="Giacomelli L."/>
            <person name="Pillardy J."/>
            <person name="van Wijk K.J."/>
        </authorList>
    </citation>
    <scope>SUBUNIT</scope>
    <scope>SUBCELLULAR LOCATION</scope>
    <scope>IDENTIFICATION BY MASS SPECTROMETRY</scope>
</reference>
<reference key="8">
    <citation type="journal article" date="2004" name="Plant Physiol.">
        <title>A stromal Hsp100 protein is required for normal chloroplast development and function in Arabidopsis.</title>
        <authorList>
            <person name="Constan D."/>
            <person name="Froehlich J.E."/>
            <person name="Rangarajan S."/>
            <person name="Keegstra K."/>
        </authorList>
    </citation>
    <scope>FUNCTION</scope>
    <scope>DISRUPTION PHENOTYPE</scope>
</reference>
<reference key="9">
    <citation type="journal article" date="2004" name="Plant Physiol.">
        <title>Inactivation of the clpC1 gene encoding a chloroplast Hsp100 molecular chaperone causes growth retardation, leaf chlorosis, lower photosynthetic activity, and a specific reduction in photosystem content.</title>
        <authorList>
            <person name="Sjoegren L.L."/>
            <person name="MacDonald T.M."/>
            <person name="Sutinen S."/>
            <person name="Clarke A.K."/>
        </authorList>
    </citation>
    <scope>DISRUPTION PHENOTYPE</scope>
</reference>
<reference key="10">
    <citation type="journal article" date="2004" name="Proc. Natl. Acad. Sci. U.S.A.">
        <title>Mutations in ClpC2/Hsp100 suppress the requirement for FtsH in thylakoid membrane biogenesis.</title>
        <authorList>
            <person name="Park S."/>
            <person name="Rodermel S.R."/>
        </authorList>
    </citation>
    <scope>FUNCTION</scope>
</reference>
<reference key="11">
    <citation type="journal article" date="2005" name="Physiol. Plantarum">
        <title>The ATP-dependent Clp protease in chloroplasts of higher plants.</title>
        <authorList>
            <person name="Clarke A.K."/>
            <person name="MacDonald T.M."/>
            <person name="Sjoegren L.L."/>
        </authorList>
    </citation>
    <scope>NOMENCLATURE</scope>
    <scope>DISRUPTION PHENOTYPE</scope>
</reference>
<reference key="12">
    <citation type="journal article" date="2005" name="Plant J.">
        <title>In vivo studies on the roles of Tic110, Tic40 and Hsp93 during chloroplast protein import.</title>
        <authorList>
            <person name="Kovacheva S."/>
            <person name="Bedard J."/>
            <person name="Patel R."/>
            <person name="Dudley P."/>
            <person name="Twell D."/>
            <person name="Rios G."/>
            <person name="Koncz C."/>
            <person name="Jarvis P."/>
        </authorList>
    </citation>
    <scope>FUNCTION</scope>
    <scope>TISSUE SPECIFICITY</scope>
    <scope>DISRUPTION PHENOTYPE</scope>
</reference>
<reference key="13">
    <citation type="journal article" date="2007" name="Plant J.">
        <title>Further in vivo studies on the role of the molecular chaperone, Hsp93, in plastid protein import.</title>
        <authorList>
            <person name="Kovacheva S."/>
            <person name="Bedard J."/>
            <person name="Wardle A."/>
            <person name="Patel R."/>
            <person name="Jarvis P."/>
        </authorList>
    </citation>
    <scope>FUNCTION</scope>
    <scope>DISRUPTION PHENOTYPE</scope>
</reference>
<reference key="14">
    <citation type="journal article" date="2007" name="Plant J.">
        <title>Clp protease controls chlorophyll b synthesis by regulating the level of chlorophyllide a oxygenase.</title>
        <authorList>
            <person name="Nakagawara E."/>
            <person name="Sakuraba Y."/>
            <person name="Yamasato A."/>
            <person name="Tanaka R."/>
            <person name="Tanaka A."/>
        </authorList>
    </citation>
    <scope>FUNCTION</scope>
    <scope>DISRUPTION PHENOTYPE</scope>
</reference>
<reference key="15">
    <citation type="journal article" date="2007" name="Plant J.">
        <title>The Arabidopsis ClpB/Hsp100 family of proteins: chaperones for stress and chloroplast development.</title>
        <authorList>
            <person name="Lee U."/>
            <person name="Rioflorido I."/>
            <person name="Hong S.W."/>
            <person name="Larkindale J."/>
            <person name="Waters E.R."/>
            <person name="Vierling E."/>
        </authorList>
    </citation>
    <scope>INDUCTION</scope>
</reference>
<reference key="16">
    <citation type="journal article" date="2010" name="Ann. Bot.">
        <title>ClpC1, an ATP-dependent Clp protease in plastids, is involved in iron homeostasis in Arabidopsis leaves.</title>
        <authorList>
            <person name="Wu H."/>
            <person name="Ji Y."/>
            <person name="Du J."/>
            <person name="Kong D."/>
            <person name="Liang H."/>
            <person name="Ling H.Q."/>
        </authorList>
    </citation>
    <scope>FUNCTION</scope>
    <scope>SUBCELLULAR LOCATION</scope>
    <scope>TISSUE SPECIFICITY</scope>
    <scope>DISRUPTION PHENOTYPE</scope>
    <scope>MUTAGENESIS OF GLY-773</scope>
</reference>
<reference key="17">
    <citation type="journal article" date="2012" name="Plant Physiol.">
        <title>The amino-terminal domain of chloroplast Hsp93 is important for its membrane association and functions in vivo.</title>
        <authorList>
            <person name="Chu C.C."/>
            <person name="Li H.M."/>
        </authorList>
    </citation>
    <scope>FUNCTION</scope>
    <scope>DOMAIN</scope>
</reference>
<reference key="18">
    <citation type="journal article" date="2012" name="Physiol. Plantarum">
        <title>The chloroplast ATP-dependent Clp protease in vascular plants - new dimensions and future challenges.</title>
        <authorList>
            <person name="Clarke A.K."/>
        </authorList>
    </citation>
    <scope>REVIEW</scope>
</reference>
<reference key="19">
    <citation type="journal article" date="2013" name="Plant Cell">
        <title>ClpS1 is a conserved substrate selector for the chloroplast Clp protease system in Arabidopsis.</title>
        <authorList>
            <person name="Nishimura K."/>
            <person name="Asakura Y."/>
            <person name="Friso G."/>
            <person name="Kim J."/>
            <person name="Oh S.H."/>
            <person name="Rutschow H."/>
            <person name="Ponnala L."/>
            <person name="van Wijk K.J."/>
        </authorList>
    </citation>
    <scope>TISSUE SPECIFICITY</scope>
    <scope>INTERACTION WITH CLPS1</scope>
</reference>
<reference key="20">
    <citation type="journal article" date="2014" name="J. Biol. Chem.">
        <title>Quantitative analysis of the chloroplast molecular chaperone ClpC/Hsp93 in Arabidopsis reveals new insights into its localization, interaction with the Clp proteolytic core, and functional importance.</title>
        <authorList>
            <person name="Sjoegren L.L."/>
            <person name="Tanabe N."/>
            <person name="Lymperopoulos P."/>
            <person name="Khan N.Z."/>
            <person name="Rodermel S.R."/>
            <person name="Aronsson H."/>
            <person name="Clarke A.K."/>
        </authorList>
    </citation>
    <scope>FUNCTION</scope>
    <scope>SUBCELLULAR LOCATION</scope>
</reference>
<reference key="21">
    <citation type="journal article" date="2015" name="Plant Cell">
        <title>Discovery of a unique Clp Component, ClpF, in chloroplasts: A proposed binary ClpF-ClpS1 adaptor complex functions in substrate recognition and delivery.</title>
        <authorList>
            <person name="Nishimura K."/>
            <person name="Apitz J."/>
            <person name="Friso G."/>
            <person name="Kim J."/>
            <person name="Ponnala L."/>
            <person name="Grimm B."/>
            <person name="van Wijk K.J."/>
        </authorList>
    </citation>
    <scope>INTERACTION WITH CLPF</scope>
</reference>
<feature type="transit peptide" description="Chloroplast" evidence="2">
    <location>
        <begin position="1"/>
        <end position="38"/>
    </location>
</feature>
<feature type="chain" id="PRO_0000412575" description="Chaperone protein ClpC1, chloroplastic">
    <location>
        <begin position="39"/>
        <end position="929"/>
    </location>
</feature>
<feature type="domain" description="Clp R" evidence="4">
    <location>
        <begin position="95"/>
        <end position="237"/>
    </location>
</feature>
<feature type="domain" description="UVR" evidence="3">
    <location>
        <begin position="511"/>
        <end position="546"/>
    </location>
</feature>
<feature type="region of interest" description="Repeat 1" evidence="4">
    <location>
        <begin position="98"/>
        <end position="163"/>
    </location>
</feature>
<feature type="region of interest" description="Repeat 2" evidence="4">
    <location>
        <begin position="173"/>
        <end position="237"/>
    </location>
</feature>
<feature type="region of interest" description="I" evidence="1">
    <location>
        <begin position="257"/>
        <end position="504"/>
    </location>
</feature>
<feature type="region of interest" description="Disordered" evidence="5">
    <location>
        <begin position="552"/>
        <end position="571"/>
    </location>
</feature>
<feature type="region of interest" description="II" evidence="1">
    <location>
        <begin position="571"/>
        <end position="762"/>
    </location>
</feature>
<feature type="region of interest" description="Disordered" evidence="5">
    <location>
        <begin position="908"/>
        <end position="929"/>
    </location>
</feature>
<feature type="compositionally biased region" description="Basic and acidic residues" evidence="5">
    <location>
        <begin position="553"/>
        <end position="562"/>
    </location>
</feature>
<feature type="compositionally biased region" description="Polar residues" evidence="5">
    <location>
        <begin position="908"/>
        <end position="919"/>
    </location>
</feature>
<feature type="compositionally biased region" description="Acidic residues" evidence="5">
    <location>
        <begin position="920"/>
        <end position="929"/>
    </location>
</feature>
<feature type="binding site" evidence="2">
    <location>
        <begin position="302"/>
        <end position="309"/>
    </location>
    <ligand>
        <name>ATP</name>
        <dbReference type="ChEBI" id="CHEBI:30616"/>
    </ligand>
</feature>
<feature type="binding site" evidence="2">
    <location>
        <begin position="645"/>
        <end position="652"/>
    </location>
    <ligand>
        <name>ATP</name>
        <dbReference type="ChEBI" id="CHEBI:30616"/>
    </ligand>
</feature>
<feature type="mutagenesis site" description="In irm1; iron deficiency chlorosis." evidence="15">
    <original>G</original>
    <variation>R</variation>
    <location>
        <position position="773"/>
    </location>
</feature>
<feature type="sequence conflict" description="In Ref. 1; AAC04687." evidence="23" ref="1">
    <original>SQLQVSGLR</original>
    <variation>IIFNVWLP</variation>
    <location>
        <begin position="40"/>
        <end position="48"/>
    </location>
</feature>
<feature type="sequence conflict" description="In Ref. 1; AAC04687." evidence="23" ref="1">
    <original>EA</original>
    <variation>AT</variation>
    <location>
        <begin position="187"/>
        <end position="188"/>
    </location>
</feature>
<feature type="sequence conflict" description="In Ref. 1; AAC04687." evidence="23" ref="1">
    <original>A</original>
    <variation>V</variation>
    <location>
        <position position="507"/>
    </location>
</feature>
<feature type="sequence conflict" description="In Ref. 1; AAC04687." evidence="23" ref="1">
    <original>K</original>
    <variation>T</variation>
    <location>
        <position position="685"/>
    </location>
</feature>
<feature type="sequence conflict" description="In Ref. 1; AAC04687." evidence="23" ref="1">
    <original>P</original>
    <variation>L</variation>
    <location>
        <position position="690"/>
    </location>
</feature>
<feature type="helix" evidence="26">
    <location>
        <begin position="100"/>
        <end position="115"/>
    </location>
</feature>
<feature type="helix" evidence="26">
    <location>
        <begin position="123"/>
        <end position="132"/>
    </location>
</feature>
<feature type="helix" evidence="26">
    <location>
        <begin position="137"/>
        <end position="144"/>
    </location>
</feature>
<feature type="helix" evidence="26">
    <location>
        <begin position="149"/>
        <end position="160"/>
    </location>
</feature>
<feature type="helix" evidence="26">
    <location>
        <begin position="175"/>
        <end position="190"/>
    </location>
</feature>
<feature type="strand" evidence="26">
    <location>
        <begin position="194"/>
        <end position="196"/>
    </location>
</feature>
<feature type="helix" evidence="26">
    <location>
        <begin position="198"/>
        <end position="208"/>
    </location>
</feature>
<feature type="helix" evidence="26">
    <location>
        <begin position="212"/>
        <end position="219"/>
    </location>
</feature>
<feature type="helix" evidence="26">
    <location>
        <begin position="224"/>
        <end position="237"/>
    </location>
</feature>
<keyword id="KW-0002">3D-structure</keyword>
<keyword id="KW-0067">ATP-binding</keyword>
<keyword id="KW-0143">Chaperone</keyword>
<keyword id="KW-0150">Chloroplast</keyword>
<keyword id="KW-0472">Membrane</keyword>
<keyword id="KW-0547">Nucleotide-binding</keyword>
<keyword id="KW-0934">Plastid</keyword>
<keyword id="KW-0653">Protein transport</keyword>
<keyword id="KW-1185">Reference proteome</keyword>
<keyword id="KW-0677">Repeat</keyword>
<keyword id="KW-0809">Transit peptide</keyword>
<keyword id="KW-0813">Transport</keyword>
<protein>
    <recommendedName>
        <fullName evidence="21">Chaperone protein ClpC1, chloroplastic</fullName>
    </recommendedName>
    <alternativeName>
        <fullName>ATP-dependent Clp protease ATP-binding subunit ClpC homolog 1</fullName>
    </alternativeName>
    <alternativeName>
        <fullName>Casein lytic proteinase C1</fullName>
    </alternativeName>
    <alternativeName>
        <fullName>Protein DE-REGULATED CAO ACCUMULATION 1</fullName>
    </alternativeName>
    <alternativeName>
        <fullName>Protein IRON-RESCUED MUTANT 1</fullName>
    </alternativeName>
</protein>